<feature type="chain" id="PRO_1000131315" description="ATP-dependent RNA helicase RhlB">
    <location>
        <begin position="1"/>
        <end position="428"/>
    </location>
</feature>
<feature type="domain" description="Helicase ATP-binding" evidence="1">
    <location>
        <begin position="40"/>
        <end position="219"/>
    </location>
</feature>
<feature type="domain" description="Helicase C-terminal" evidence="1">
    <location>
        <begin position="245"/>
        <end position="390"/>
    </location>
</feature>
<feature type="region of interest" description="Disordered" evidence="2">
    <location>
        <begin position="394"/>
        <end position="428"/>
    </location>
</feature>
<feature type="short sequence motif" description="Q motif">
    <location>
        <begin position="9"/>
        <end position="37"/>
    </location>
</feature>
<feature type="short sequence motif" description="DEAD box">
    <location>
        <begin position="165"/>
        <end position="168"/>
    </location>
</feature>
<feature type="binding site" evidence="1">
    <location>
        <begin position="53"/>
        <end position="60"/>
    </location>
    <ligand>
        <name>ATP</name>
        <dbReference type="ChEBI" id="CHEBI:30616"/>
    </ligand>
</feature>
<sequence length="428" mass="47947">MSKTHLTEQKFSDFALHPLVVEALENKGFQYCTPIQALALPLTLSGRDVAGQAQTGTGKTLAFLASTFHYLLSHPAEEGRQTNQPRALIMAPTRELAVQIHSDAESLSQVTGLKLGLAYGGDGYDKQLKVLESGVDILIGTTGRLIDYAKQNYINLGAIQVVVLDEADRMYDLGFIKDIRWLFRRMPSVDKRLNMLFSATLSYRVRELAFEQMNNAEYVEVEPLQKTGHRIKEELFYPSNEEKMRLLQTLIEEEWPDRCIIFANTKHRCEEIWGHLAADGHRVGLLTGDVAQKKRLRILEDFTKGDLDILVATDVAARGLHIPLVTHVFNYDLPDDCEDYVHRIGRTGRAGESGHSISLACEEYALNLPAIETYTGHSIPVSKYNSDALLTDLPAPKRLARTRTGNGPRRNSAPRRSGAPRNNRKRPG</sequence>
<protein>
    <recommendedName>
        <fullName evidence="1">ATP-dependent RNA helicase RhlB</fullName>
        <ecNumber evidence="1">3.6.4.13</ecNumber>
    </recommendedName>
</protein>
<accession>B1JQ11</accession>
<name>RHLB_YERPY</name>
<gene>
    <name evidence="1" type="primary">rhlB</name>
    <name type="ordered locus">YPK_4036</name>
</gene>
<keyword id="KW-0067">ATP-binding</keyword>
<keyword id="KW-0963">Cytoplasm</keyword>
<keyword id="KW-0347">Helicase</keyword>
<keyword id="KW-0378">Hydrolase</keyword>
<keyword id="KW-0547">Nucleotide-binding</keyword>
<keyword id="KW-0694">RNA-binding</keyword>
<organism>
    <name type="scientific">Yersinia pseudotuberculosis serotype O:3 (strain YPIII)</name>
    <dbReference type="NCBI Taxonomy" id="502800"/>
    <lineage>
        <taxon>Bacteria</taxon>
        <taxon>Pseudomonadati</taxon>
        <taxon>Pseudomonadota</taxon>
        <taxon>Gammaproteobacteria</taxon>
        <taxon>Enterobacterales</taxon>
        <taxon>Yersiniaceae</taxon>
        <taxon>Yersinia</taxon>
    </lineage>
</organism>
<reference key="1">
    <citation type="submission" date="2008-02" db="EMBL/GenBank/DDBJ databases">
        <title>Complete sequence of Yersinia pseudotuberculosis YPIII.</title>
        <authorList>
            <consortium name="US DOE Joint Genome Institute"/>
            <person name="Copeland A."/>
            <person name="Lucas S."/>
            <person name="Lapidus A."/>
            <person name="Glavina del Rio T."/>
            <person name="Dalin E."/>
            <person name="Tice H."/>
            <person name="Bruce D."/>
            <person name="Goodwin L."/>
            <person name="Pitluck S."/>
            <person name="Munk A.C."/>
            <person name="Brettin T."/>
            <person name="Detter J.C."/>
            <person name="Han C."/>
            <person name="Tapia R."/>
            <person name="Schmutz J."/>
            <person name="Larimer F."/>
            <person name="Land M."/>
            <person name="Hauser L."/>
            <person name="Challacombe J.F."/>
            <person name="Green L."/>
            <person name="Lindler L.E."/>
            <person name="Nikolich M.P."/>
            <person name="Richardson P."/>
        </authorList>
    </citation>
    <scope>NUCLEOTIDE SEQUENCE [LARGE SCALE GENOMIC DNA]</scope>
    <source>
        <strain>YPIII</strain>
    </source>
</reference>
<dbReference type="EC" id="3.6.4.13" evidence="1"/>
<dbReference type="EMBL" id="CP000950">
    <property type="protein sequence ID" value="ACA70298.1"/>
    <property type="molecule type" value="Genomic_DNA"/>
</dbReference>
<dbReference type="RefSeq" id="WP_002228177.1">
    <property type="nucleotide sequence ID" value="NZ_CP009792.1"/>
</dbReference>
<dbReference type="SMR" id="B1JQ11"/>
<dbReference type="GeneID" id="96663646"/>
<dbReference type="KEGG" id="ypy:YPK_4036"/>
<dbReference type="PATRIC" id="fig|502800.11.peg.385"/>
<dbReference type="GO" id="GO:0005829">
    <property type="term" value="C:cytosol"/>
    <property type="evidence" value="ECO:0007669"/>
    <property type="project" value="TreeGrafter"/>
</dbReference>
<dbReference type="GO" id="GO:0005524">
    <property type="term" value="F:ATP binding"/>
    <property type="evidence" value="ECO:0007669"/>
    <property type="project" value="UniProtKB-UniRule"/>
</dbReference>
<dbReference type="GO" id="GO:0016887">
    <property type="term" value="F:ATP hydrolysis activity"/>
    <property type="evidence" value="ECO:0007669"/>
    <property type="project" value="RHEA"/>
</dbReference>
<dbReference type="GO" id="GO:0003723">
    <property type="term" value="F:RNA binding"/>
    <property type="evidence" value="ECO:0007669"/>
    <property type="project" value="UniProtKB-UniRule"/>
</dbReference>
<dbReference type="GO" id="GO:0003724">
    <property type="term" value="F:RNA helicase activity"/>
    <property type="evidence" value="ECO:0007669"/>
    <property type="project" value="UniProtKB-UniRule"/>
</dbReference>
<dbReference type="GO" id="GO:0006401">
    <property type="term" value="P:RNA catabolic process"/>
    <property type="evidence" value="ECO:0007669"/>
    <property type="project" value="UniProtKB-UniRule"/>
</dbReference>
<dbReference type="CDD" id="cd00268">
    <property type="entry name" value="DEADc"/>
    <property type="match status" value="1"/>
</dbReference>
<dbReference type="CDD" id="cd18787">
    <property type="entry name" value="SF2_C_DEAD"/>
    <property type="match status" value="1"/>
</dbReference>
<dbReference type="FunFam" id="3.40.50.300:FF:000312">
    <property type="entry name" value="ATP-dependent RNA helicase RhlB"/>
    <property type="match status" value="1"/>
</dbReference>
<dbReference type="Gene3D" id="3.40.50.300">
    <property type="entry name" value="P-loop containing nucleotide triphosphate hydrolases"/>
    <property type="match status" value="2"/>
</dbReference>
<dbReference type="HAMAP" id="MF_00661">
    <property type="entry name" value="DEAD_helicase_RhlB"/>
    <property type="match status" value="1"/>
</dbReference>
<dbReference type="InterPro" id="IPR011545">
    <property type="entry name" value="DEAD/DEAH_box_helicase_dom"/>
</dbReference>
<dbReference type="InterPro" id="IPR050079">
    <property type="entry name" value="DEAD_box_RNA_helicase"/>
</dbReference>
<dbReference type="InterPro" id="IPR014001">
    <property type="entry name" value="Helicase_ATP-bd"/>
</dbReference>
<dbReference type="InterPro" id="IPR001650">
    <property type="entry name" value="Helicase_C-like"/>
</dbReference>
<dbReference type="InterPro" id="IPR027417">
    <property type="entry name" value="P-loop_NTPase"/>
</dbReference>
<dbReference type="InterPro" id="IPR000629">
    <property type="entry name" value="RNA-helicase_DEAD-box_CS"/>
</dbReference>
<dbReference type="InterPro" id="IPR023554">
    <property type="entry name" value="RNA_helicase_ATP-dep_RhlB"/>
</dbReference>
<dbReference type="InterPro" id="IPR014014">
    <property type="entry name" value="RNA_helicase_DEAD_Q_motif"/>
</dbReference>
<dbReference type="NCBIfam" id="NF003419">
    <property type="entry name" value="PRK04837.1"/>
    <property type="match status" value="1"/>
</dbReference>
<dbReference type="PANTHER" id="PTHR47959:SF10">
    <property type="entry name" value="ATP-DEPENDENT RNA HELICASE RHLB"/>
    <property type="match status" value="1"/>
</dbReference>
<dbReference type="PANTHER" id="PTHR47959">
    <property type="entry name" value="ATP-DEPENDENT RNA HELICASE RHLE-RELATED"/>
    <property type="match status" value="1"/>
</dbReference>
<dbReference type="Pfam" id="PF00270">
    <property type="entry name" value="DEAD"/>
    <property type="match status" value="1"/>
</dbReference>
<dbReference type="Pfam" id="PF00271">
    <property type="entry name" value="Helicase_C"/>
    <property type="match status" value="1"/>
</dbReference>
<dbReference type="SMART" id="SM00487">
    <property type="entry name" value="DEXDc"/>
    <property type="match status" value="1"/>
</dbReference>
<dbReference type="SMART" id="SM00490">
    <property type="entry name" value="HELICc"/>
    <property type="match status" value="1"/>
</dbReference>
<dbReference type="SUPFAM" id="SSF52540">
    <property type="entry name" value="P-loop containing nucleoside triphosphate hydrolases"/>
    <property type="match status" value="1"/>
</dbReference>
<dbReference type="PROSITE" id="PS00039">
    <property type="entry name" value="DEAD_ATP_HELICASE"/>
    <property type="match status" value="1"/>
</dbReference>
<dbReference type="PROSITE" id="PS51192">
    <property type="entry name" value="HELICASE_ATP_BIND_1"/>
    <property type="match status" value="1"/>
</dbReference>
<dbReference type="PROSITE" id="PS51194">
    <property type="entry name" value="HELICASE_CTER"/>
    <property type="match status" value="1"/>
</dbReference>
<dbReference type="PROSITE" id="PS51195">
    <property type="entry name" value="Q_MOTIF"/>
    <property type="match status" value="1"/>
</dbReference>
<evidence type="ECO:0000255" key="1">
    <source>
        <dbReference type="HAMAP-Rule" id="MF_00661"/>
    </source>
</evidence>
<evidence type="ECO:0000256" key="2">
    <source>
        <dbReference type="SAM" id="MobiDB-lite"/>
    </source>
</evidence>
<comment type="function">
    <text evidence="1">DEAD-box RNA helicase involved in RNA degradation. Has RNA-dependent ATPase activity and unwinds double-stranded RNA.</text>
</comment>
<comment type="catalytic activity">
    <reaction evidence="1">
        <text>ATP + H2O = ADP + phosphate + H(+)</text>
        <dbReference type="Rhea" id="RHEA:13065"/>
        <dbReference type="ChEBI" id="CHEBI:15377"/>
        <dbReference type="ChEBI" id="CHEBI:15378"/>
        <dbReference type="ChEBI" id="CHEBI:30616"/>
        <dbReference type="ChEBI" id="CHEBI:43474"/>
        <dbReference type="ChEBI" id="CHEBI:456216"/>
        <dbReference type="EC" id="3.6.4.13"/>
    </reaction>
</comment>
<comment type="subunit">
    <text evidence="1">Component of the RNA degradosome, which is a multiprotein complex involved in RNA processing and mRNA degradation.</text>
</comment>
<comment type="subcellular location">
    <subcellularLocation>
        <location evidence="1">Cytoplasm</location>
    </subcellularLocation>
</comment>
<comment type="similarity">
    <text evidence="1">Belongs to the DEAD box helicase family. RhlB subfamily.</text>
</comment>
<proteinExistence type="inferred from homology"/>